<proteinExistence type="evidence at protein level"/>
<comment type="function">
    <text>Phosphorylation of dTMP to form dTDP in both de novo and salvage pathways of dTTP synthesis. 5-bromo-2'deoxyuridine monophosphate is also a good phosphate acceptor.</text>
</comment>
<comment type="catalytic activity">
    <reaction>
        <text>dTMP + ATP = dTDP + ADP</text>
        <dbReference type="Rhea" id="RHEA:13517"/>
        <dbReference type="ChEBI" id="CHEBI:30616"/>
        <dbReference type="ChEBI" id="CHEBI:58369"/>
        <dbReference type="ChEBI" id="CHEBI:63528"/>
        <dbReference type="ChEBI" id="CHEBI:456216"/>
        <dbReference type="EC" id="2.7.4.9"/>
    </reaction>
</comment>
<comment type="subunit">
    <text>Homodimer.</text>
</comment>
<comment type="mass spectrometry"/>
<comment type="similarity">
    <text evidence="3">Belongs to the thymidylate kinase family.</text>
</comment>
<reference key="1">
    <citation type="journal article" date="1999" name="Eur. J. Biochem.">
        <title>The highly similar TMP kinases of Yersinia pestis and Escherichia coli differ markedly in their AZTMP phosphorylating activity.</title>
        <authorList>
            <person name="Chenal-Francisque V."/>
            <person name="Tourneux L."/>
            <person name="Carniel E."/>
            <person name="Christova P."/>
            <person name="Li de la Sierra I."/>
            <person name="Barzu O."/>
            <person name="Gilles A.-M."/>
        </authorList>
    </citation>
    <scope>NUCLEOTIDE SEQUENCE [GENOMIC DNA]</scope>
    <scope>CHARACTERIZATION</scope>
    <scope>MASS SPECTROMETRY</scope>
    <source>
        <strain>6/69C</strain>
    </source>
</reference>
<reference key="2">
    <citation type="journal article" date="2001" name="Nature">
        <title>Genome sequence of Yersinia pestis, the causative agent of plague.</title>
        <authorList>
            <person name="Parkhill J."/>
            <person name="Wren B.W."/>
            <person name="Thomson N.R."/>
            <person name="Titball R.W."/>
            <person name="Holden M.T.G."/>
            <person name="Prentice M.B."/>
            <person name="Sebaihia M."/>
            <person name="James K.D."/>
            <person name="Churcher C.M."/>
            <person name="Mungall K.L."/>
            <person name="Baker S."/>
            <person name="Basham D."/>
            <person name="Bentley S.D."/>
            <person name="Brooks K."/>
            <person name="Cerdeno-Tarraga A.-M."/>
            <person name="Chillingworth T."/>
            <person name="Cronin A."/>
            <person name="Davies R.M."/>
            <person name="Davis P."/>
            <person name="Dougan G."/>
            <person name="Feltwell T."/>
            <person name="Hamlin N."/>
            <person name="Holroyd S."/>
            <person name="Jagels K."/>
            <person name="Karlyshev A.V."/>
            <person name="Leather S."/>
            <person name="Moule S."/>
            <person name="Oyston P.C.F."/>
            <person name="Quail M.A."/>
            <person name="Rutherford K.M."/>
            <person name="Simmonds M."/>
            <person name="Skelton J."/>
            <person name="Stevens K."/>
            <person name="Whitehead S."/>
            <person name="Barrell B.G."/>
        </authorList>
    </citation>
    <scope>NUCLEOTIDE SEQUENCE [LARGE SCALE GENOMIC DNA]</scope>
    <source>
        <strain>CO-92 / Biovar Orientalis</strain>
    </source>
</reference>
<reference key="3">
    <citation type="journal article" date="2002" name="J. Bacteriol.">
        <title>Genome sequence of Yersinia pestis KIM.</title>
        <authorList>
            <person name="Deng W."/>
            <person name="Burland V."/>
            <person name="Plunkett G. III"/>
            <person name="Boutin A."/>
            <person name="Mayhew G.F."/>
            <person name="Liss P."/>
            <person name="Perna N.T."/>
            <person name="Rose D.J."/>
            <person name="Mau B."/>
            <person name="Zhou S."/>
            <person name="Schwartz D.C."/>
            <person name="Fetherston J.D."/>
            <person name="Lindler L.E."/>
            <person name="Brubaker R.R."/>
            <person name="Plano G.V."/>
            <person name="Straley S.C."/>
            <person name="McDonough K.A."/>
            <person name="Nilles M.L."/>
            <person name="Matson J.S."/>
            <person name="Blattner F.R."/>
            <person name="Perry R.D."/>
        </authorList>
    </citation>
    <scope>NUCLEOTIDE SEQUENCE [LARGE SCALE GENOMIC DNA]</scope>
    <source>
        <strain>KIM10+ / Biovar Mediaevalis</strain>
    </source>
</reference>
<reference key="4">
    <citation type="journal article" date="2004" name="DNA Res.">
        <title>Complete genome sequence of Yersinia pestis strain 91001, an isolate avirulent to humans.</title>
        <authorList>
            <person name="Song Y."/>
            <person name="Tong Z."/>
            <person name="Wang J."/>
            <person name="Wang L."/>
            <person name="Guo Z."/>
            <person name="Han Y."/>
            <person name="Zhang J."/>
            <person name="Pei D."/>
            <person name="Zhou D."/>
            <person name="Qin H."/>
            <person name="Pang X."/>
            <person name="Han Y."/>
            <person name="Zhai J."/>
            <person name="Li M."/>
            <person name="Cui B."/>
            <person name="Qi Z."/>
            <person name="Jin L."/>
            <person name="Dai R."/>
            <person name="Chen F."/>
            <person name="Li S."/>
            <person name="Ye C."/>
            <person name="Du Z."/>
            <person name="Lin W."/>
            <person name="Wang J."/>
            <person name="Yu J."/>
            <person name="Yang H."/>
            <person name="Wang J."/>
            <person name="Huang P."/>
            <person name="Yang R."/>
        </authorList>
    </citation>
    <scope>NUCLEOTIDE SEQUENCE [LARGE SCALE GENOMIC DNA]</scope>
    <source>
        <strain>91001 / Biovar Mediaevalis</strain>
    </source>
</reference>
<protein>
    <recommendedName>
        <fullName>Thymidylate kinase</fullName>
        <ecNumber>2.7.4.9</ecNumber>
    </recommendedName>
    <alternativeName>
        <fullName>dTMP kinase</fullName>
    </alternativeName>
</protein>
<sequence>MNSKFIVIEGLEGAGKTTTRDTVVAVLRAQGINDIVFTREPGGTPLAEKLRDLIKQGIDGEVLTDKAEVLMLYAARVQLVENVIKPALARGSWVVGDRHDLSSQAYQGGGRGIDSQLMASLRDTVLGEFRPDLTLYLDLPPAVGLARARARGELDRIEQESLAFFERTRARYLELAASDASIKTIDASQPIEQVSASISQALAQWLTNQEPV</sequence>
<feature type="chain" id="PRO_0000155379" description="Thymidylate kinase">
    <location>
        <begin position="1"/>
        <end position="212"/>
    </location>
</feature>
<feature type="binding site" evidence="1">
    <location>
        <begin position="10"/>
        <end position="17"/>
    </location>
    <ligand>
        <name>ATP</name>
        <dbReference type="ChEBI" id="CHEBI:30616"/>
    </ligand>
</feature>
<evidence type="ECO:0000255" key="1"/>
<evidence type="ECO:0000269" key="2">
    <source>
    </source>
</evidence>
<evidence type="ECO:0000305" key="3"/>
<gene>
    <name type="primary">tmk</name>
    <name type="ordered locus">YPO1605</name>
    <name type="ordered locus">y1764</name>
    <name type="ordered locus">YP_2249</name>
</gene>
<keyword id="KW-0067">ATP-binding</keyword>
<keyword id="KW-0418">Kinase</keyword>
<keyword id="KW-0545">Nucleotide biosynthesis</keyword>
<keyword id="KW-0547">Nucleotide-binding</keyword>
<keyword id="KW-1185">Reference proteome</keyword>
<keyword id="KW-0808">Transferase</keyword>
<organism>
    <name type="scientific">Yersinia pestis</name>
    <dbReference type="NCBI Taxonomy" id="632"/>
    <lineage>
        <taxon>Bacteria</taxon>
        <taxon>Pseudomonadati</taxon>
        <taxon>Pseudomonadota</taxon>
        <taxon>Gammaproteobacteria</taxon>
        <taxon>Enterobacterales</taxon>
        <taxon>Yersiniaceae</taxon>
        <taxon>Yersinia</taxon>
    </lineage>
</organism>
<accession>O69169</accession>
<accession>Q0WGH2</accession>
<name>KTHY_YERPE</name>
<dbReference type="EC" id="2.7.4.9"/>
<dbReference type="EMBL" id="AF065312">
    <property type="protein sequence ID" value="AAC18855.1"/>
    <property type="molecule type" value="Genomic_DNA"/>
</dbReference>
<dbReference type="EMBL" id="AL590842">
    <property type="protein sequence ID" value="CAL20250.1"/>
    <property type="molecule type" value="Genomic_DNA"/>
</dbReference>
<dbReference type="EMBL" id="AE009952">
    <property type="protein sequence ID" value="AAM85332.1"/>
    <property type="molecule type" value="Genomic_DNA"/>
</dbReference>
<dbReference type="EMBL" id="AE017042">
    <property type="protein sequence ID" value="AAS62455.1"/>
    <property type="molecule type" value="Genomic_DNA"/>
</dbReference>
<dbReference type="PIR" id="AH0195">
    <property type="entry name" value="AH0195"/>
</dbReference>
<dbReference type="RefSeq" id="WP_002213082.1">
    <property type="nucleotide sequence ID" value="NZ_WUCM01000130.1"/>
</dbReference>
<dbReference type="RefSeq" id="YP_002346616.1">
    <property type="nucleotide sequence ID" value="NC_003143.1"/>
</dbReference>
<dbReference type="SMR" id="O69169"/>
<dbReference type="STRING" id="214092.YPO1605"/>
<dbReference type="PaxDb" id="214092-YPO1605"/>
<dbReference type="DNASU" id="1146711"/>
<dbReference type="EnsemblBacteria" id="AAS62455">
    <property type="protein sequence ID" value="AAS62455"/>
    <property type="gene ID" value="YP_2249"/>
</dbReference>
<dbReference type="GeneID" id="57976966"/>
<dbReference type="KEGG" id="ype:YPO1605"/>
<dbReference type="KEGG" id="ypk:y1764"/>
<dbReference type="KEGG" id="ypm:YP_2249"/>
<dbReference type="PATRIC" id="fig|214092.21.peg.1948"/>
<dbReference type="eggNOG" id="COG0125">
    <property type="taxonomic scope" value="Bacteria"/>
</dbReference>
<dbReference type="HOGENOM" id="CLU_049131_0_1_6"/>
<dbReference type="OMA" id="FLYTADH"/>
<dbReference type="OrthoDB" id="9774907at2"/>
<dbReference type="Proteomes" id="UP000000815">
    <property type="component" value="Chromosome"/>
</dbReference>
<dbReference type="Proteomes" id="UP000001019">
    <property type="component" value="Chromosome"/>
</dbReference>
<dbReference type="Proteomes" id="UP000002490">
    <property type="component" value="Chromosome"/>
</dbReference>
<dbReference type="GO" id="GO:0005737">
    <property type="term" value="C:cytoplasm"/>
    <property type="evidence" value="ECO:0000318"/>
    <property type="project" value="GO_Central"/>
</dbReference>
<dbReference type="GO" id="GO:0005829">
    <property type="term" value="C:cytosol"/>
    <property type="evidence" value="ECO:0000318"/>
    <property type="project" value="GO_Central"/>
</dbReference>
<dbReference type="GO" id="GO:0005524">
    <property type="term" value="F:ATP binding"/>
    <property type="evidence" value="ECO:0007669"/>
    <property type="project" value="UniProtKB-UniRule"/>
</dbReference>
<dbReference type="GO" id="GO:0004798">
    <property type="term" value="F:dTMP kinase activity"/>
    <property type="evidence" value="ECO:0000318"/>
    <property type="project" value="GO_Central"/>
</dbReference>
<dbReference type="GO" id="GO:0006233">
    <property type="term" value="P:dTDP biosynthetic process"/>
    <property type="evidence" value="ECO:0000318"/>
    <property type="project" value="GO_Central"/>
</dbReference>
<dbReference type="GO" id="GO:0006235">
    <property type="term" value="P:dTTP biosynthetic process"/>
    <property type="evidence" value="ECO:0000318"/>
    <property type="project" value="GO_Central"/>
</dbReference>
<dbReference type="GO" id="GO:0006227">
    <property type="term" value="P:dUDP biosynthetic process"/>
    <property type="evidence" value="ECO:0000318"/>
    <property type="project" value="GO_Central"/>
</dbReference>
<dbReference type="CDD" id="cd01672">
    <property type="entry name" value="TMPK"/>
    <property type="match status" value="1"/>
</dbReference>
<dbReference type="FunFam" id="3.40.50.300:FF:000321">
    <property type="entry name" value="Thymidylate kinase"/>
    <property type="match status" value="1"/>
</dbReference>
<dbReference type="Gene3D" id="3.40.50.300">
    <property type="entry name" value="P-loop containing nucleotide triphosphate hydrolases"/>
    <property type="match status" value="1"/>
</dbReference>
<dbReference type="HAMAP" id="MF_00165">
    <property type="entry name" value="Thymidylate_kinase"/>
    <property type="match status" value="1"/>
</dbReference>
<dbReference type="InterPro" id="IPR027417">
    <property type="entry name" value="P-loop_NTPase"/>
</dbReference>
<dbReference type="InterPro" id="IPR039430">
    <property type="entry name" value="Thymidylate_kin-like_dom"/>
</dbReference>
<dbReference type="InterPro" id="IPR018095">
    <property type="entry name" value="Thymidylate_kin_CS"/>
</dbReference>
<dbReference type="InterPro" id="IPR018094">
    <property type="entry name" value="Thymidylate_kinase"/>
</dbReference>
<dbReference type="NCBIfam" id="TIGR00041">
    <property type="entry name" value="DTMP_kinase"/>
    <property type="match status" value="1"/>
</dbReference>
<dbReference type="PANTHER" id="PTHR10344">
    <property type="entry name" value="THYMIDYLATE KINASE"/>
    <property type="match status" value="1"/>
</dbReference>
<dbReference type="PANTHER" id="PTHR10344:SF4">
    <property type="entry name" value="UMP-CMP KINASE 2, MITOCHONDRIAL"/>
    <property type="match status" value="1"/>
</dbReference>
<dbReference type="Pfam" id="PF02223">
    <property type="entry name" value="Thymidylate_kin"/>
    <property type="match status" value="1"/>
</dbReference>
<dbReference type="SUPFAM" id="SSF52540">
    <property type="entry name" value="P-loop containing nucleoside triphosphate hydrolases"/>
    <property type="match status" value="1"/>
</dbReference>
<dbReference type="PROSITE" id="PS01331">
    <property type="entry name" value="THYMIDYLATE_KINASE"/>
    <property type="match status" value="1"/>
</dbReference>